<sequence>MADKEATVYIVDVGRSMGECRNGRSVTDLEWAMQYVWDRITGTVATGRKTAMMGVIGLRTDETSNELEDDVHFSHIAVLSNLKQFLMPDIRKLEDELKPSKTDKGDAISAIILAIQMIITHCKKLKYRRKIVLVTNGQGRMSDEDLGEIVKKVKEDNIELVVMGIDFDDPEYGYKEEDKDPHKAENETLLRTLVEDCDGVYGTFEQAVAELDIPRVKSVRSVASFKGYLQLGNPEEYDSALRIPVERYYRTYPAKPPTASSFVLRSEPEAGQEEAESSEAAAATQKGSQSGDAGLTTVRTMRTYQVEDKSAPGGKIDIERDELAKGYEYGRTAVHISETDENITILDTFAGLELMGFIQTDQYQRYMHMSNTNIIIAQRANDKAALALSSFIHALFELECYAVARLVVKENKPPVIVLLAPSIEPEYECLLEVQLPFAEDVRTYRFPPLDKVITVSGKVVTQHRNLPSDDLLDVMGKYVNSMELVDADEDGDPVETFPIDDSYSPVLHRIDAAIRARAIHPDQPIPPPSERLTKFSHPREDLIEKSQKHLEKLIEIADVKKVPPKAKGRKRTRETEKPLSGLDVDALLHHEKRVKISPNNAIPEFKQTLAQAENIEAIKDATKQMMVIVEDQIKHSLGNANYDRVIEALGTMRDELVSYEEPASYNDFLGQLKDKLLQEKLGGDRQELWWLVRRNKLGLVTQRESDQSRVTDTEAKEVSLTKMKE</sequence>
<dbReference type="EC" id="3.6.4.12"/>
<dbReference type="EMBL" id="AB214651">
    <property type="protein sequence ID" value="BAE78503.1"/>
    <property type="molecule type" value="Genomic_DNA"/>
</dbReference>
<dbReference type="EMBL" id="AP007159">
    <property type="status" value="NOT_ANNOTATED_CDS"/>
    <property type="molecule type" value="Genomic_DNA"/>
</dbReference>
<dbReference type="SMR" id="Q2MHH2"/>
<dbReference type="STRING" id="510516.Q2MHH2"/>
<dbReference type="OMA" id="WAMQYVW"/>
<dbReference type="Proteomes" id="UP000006564">
    <property type="component" value="Chromosome 3"/>
</dbReference>
<dbReference type="GO" id="GO:0000781">
    <property type="term" value="C:chromosome, telomeric region"/>
    <property type="evidence" value="ECO:0007669"/>
    <property type="project" value="UniProtKB-SubCell"/>
</dbReference>
<dbReference type="GO" id="GO:0043564">
    <property type="term" value="C:Ku70:Ku80 complex"/>
    <property type="evidence" value="ECO:0007669"/>
    <property type="project" value="InterPro"/>
</dbReference>
<dbReference type="GO" id="GO:0005524">
    <property type="term" value="F:ATP binding"/>
    <property type="evidence" value="ECO:0007669"/>
    <property type="project" value="UniProtKB-KW"/>
</dbReference>
<dbReference type="GO" id="GO:0016887">
    <property type="term" value="F:ATP hydrolysis activity"/>
    <property type="evidence" value="ECO:0007669"/>
    <property type="project" value="RHEA"/>
</dbReference>
<dbReference type="GO" id="GO:0003684">
    <property type="term" value="F:damaged DNA binding"/>
    <property type="evidence" value="ECO:0007669"/>
    <property type="project" value="InterPro"/>
</dbReference>
<dbReference type="GO" id="GO:0003690">
    <property type="term" value="F:double-stranded DNA binding"/>
    <property type="evidence" value="ECO:0007669"/>
    <property type="project" value="TreeGrafter"/>
</dbReference>
<dbReference type="GO" id="GO:0004386">
    <property type="term" value="F:helicase activity"/>
    <property type="evidence" value="ECO:0007669"/>
    <property type="project" value="UniProtKB-KW"/>
</dbReference>
<dbReference type="GO" id="GO:0042162">
    <property type="term" value="F:telomeric DNA binding"/>
    <property type="evidence" value="ECO:0007669"/>
    <property type="project" value="InterPro"/>
</dbReference>
<dbReference type="GO" id="GO:0006310">
    <property type="term" value="P:DNA recombination"/>
    <property type="evidence" value="ECO:0007669"/>
    <property type="project" value="UniProtKB-KW"/>
</dbReference>
<dbReference type="GO" id="GO:0006303">
    <property type="term" value="P:double-strand break repair via nonhomologous end joining"/>
    <property type="evidence" value="ECO:0007669"/>
    <property type="project" value="InterPro"/>
</dbReference>
<dbReference type="GO" id="GO:0000723">
    <property type="term" value="P:telomere maintenance"/>
    <property type="evidence" value="ECO:0007669"/>
    <property type="project" value="InterPro"/>
</dbReference>
<dbReference type="CDD" id="cd00873">
    <property type="entry name" value="KU80"/>
    <property type="match status" value="1"/>
</dbReference>
<dbReference type="FunFam" id="1.25.40.240:FF:000002">
    <property type="entry name" value="ATP-dependent DNA helicase II subunit 2"/>
    <property type="match status" value="1"/>
</dbReference>
<dbReference type="FunFam" id="2.40.290.10:FF:000008">
    <property type="entry name" value="ATP-dependent DNA helicase II subunit 2"/>
    <property type="match status" value="1"/>
</dbReference>
<dbReference type="FunFam" id="3.40.50.410:FF:000073">
    <property type="entry name" value="ATP-dependent DNA helicase II subunit 2"/>
    <property type="match status" value="1"/>
</dbReference>
<dbReference type="FunFam" id="1.10.1600.10:FF:000002">
    <property type="entry name" value="X-ray repair cross-complementing protein 5"/>
    <property type="match status" value="1"/>
</dbReference>
<dbReference type="Gene3D" id="1.10.1600.10">
    <property type="match status" value="1"/>
</dbReference>
<dbReference type="Gene3D" id="2.40.290.10">
    <property type="match status" value="1"/>
</dbReference>
<dbReference type="Gene3D" id="1.25.40.240">
    <property type="entry name" value="Ku, C-terminal domain"/>
    <property type="match status" value="1"/>
</dbReference>
<dbReference type="Gene3D" id="3.40.50.410">
    <property type="entry name" value="von Willebrand factor, type A domain"/>
    <property type="match status" value="1"/>
</dbReference>
<dbReference type="InterPro" id="IPR006164">
    <property type="entry name" value="Ku70/Ku80_beta-barrel_dom"/>
</dbReference>
<dbReference type="InterPro" id="IPR024193">
    <property type="entry name" value="Ku80"/>
</dbReference>
<dbReference type="InterPro" id="IPR036494">
    <property type="entry name" value="Ku_C_sf"/>
</dbReference>
<dbReference type="InterPro" id="IPR005161">
    <property type="entry name" value="Ku_N"/>
</dbReference>
<dbReference type="InterPro" id="IPR014893">
    <property type="entry name" value="Ku_PK_bind"/>
</dbReference>
<dbReference type="InterPro" id="IPR016194">
    <property type="entry name" value="SPOC-like_C_dom_sf"/>
</dbReference>
<dbReference type="InterPro" id="IPR002035">
    <property type="entry name" value="VWF_A"/>
</dbReference>
<dbReference type="InterPro" id="IPR036465">
    <property type="entry name" value="vWFA_dom_sf"/>
</dbReference>
<dbReference type="PANTHER" id="PTHR12604">
    <property type="entry name" value="KU AUTOANTIGEN DNA HELICASE"/>
    <property type="match status" value="1"/>
</dbReference>
<dbReference type="PANTHER" id="PTHR12604:SF4">
    <property type="entry name" value="X-RAY REPAIR CROSS-COMPLEMENTING PROTEIN 5"/>
    <property type="match status" value="1"/>
</dbReference>
<dbReference type="Pfam" id="PF02735">
    <property type="entry name" value="Ku"/>
    <property type="match status" value="1"/>
</dbReference>
<dbReference type="Pfam" id="PF03731">
    <property type="entry name" value="Ku_N"/>
    <property type="match status" value="1"/>
</dbReference>
<dbReference type="Pfam" id="PF08785">
    <property type="entry name" value="Ku_PK_bind"/>
    <property type="match status" value="1"/>
</dbReference>
<dbReference type="PIRSF" id="PIRSF016570">
    <property type="entry name" value="Ku80"/>
    <property type="match status" value="1"/>
</dbReference>
<dbReference type="SMART" id="SM00559">
    <property type="entry name" value="Ku78"/>
    <property type="match status" value="1"/>
</dbReference>
<dbReference type="SUPFAM" id="SSF101420">
    <property type="entry name" value="C-terminal domain of Ku80"/>
    <property type="match status" value="1"/>
</dbReference>
<dbReference type="SUPFAM" id="SSF100939">
    <property type="entry name" value="SPOC domain-like"/>
    <property type="match status" value="1"/>
</dbReference>
<dbReference type="SUPFAM" id="SSF53300">
    <property type="entry name" value="vWA-like"/>
    <property type="match status" value="1"/>
</dbReference>
<name>KU80_ASPOR</name>
<comment type="function">
    <text>Single-stranded DNA-dependent ATP-dependent helicase. Involved in non-homologous end joining (NHEJ) DNA double strand break repair. DNA-binding is sequence-independent but has a high affinity to nicks in double-stranded DNA and to the ends of duplex DNA. Binds to naturally occurring chromosomal ends, and therefore provides chromosomal end protection. Required also for telomere recombination to repair telomeric ends in the absence of telomerase. ku70, of the ku70/ku80 heterodimer, binds to the stem loop of tlc1, the RNA component of telomerase. Involved in telomere maintenance. Interacts with telomeric repeats and subtelomeric sequences thereby controlling telomere length and protecting against subtelomeric rearrangement. Maintains telomeric chromatin, which is involved in silencing the expression of genes located at the telomere. Required for mating-type switching.</text>
</comment>
<comment type="catalytic activity">
    <reaction>
        <text>ATP + H2O = ADP + phosphate + H(+)</text>
        <dbReference type="Rhea" id="RHEA:13065"/>
        <dbReference type="ChEBI" id="CHEBI:15377"/>
        <dbReference type="ChEBI" id="CHEBI:15378"/>
        <dbReference type="ChEBI" id="CHEBI:30616"/>
        <dbReference type="ChEBI" id="CHEBI:43474"/>
        <dbReference type="ChEBI" id="CHEBI:456216"/>
        <dbReference type="EC" id="3.6.4.12"/>
    </reaction>
</comment>
<comment type="subunit">
    <text evidence="1">Heterodimer of Ku70 and Ku80.</text>
</comment>
<comment type="subcellular location">
    <subcellularLocation>
        <location evidence="1">Nucleus</location>
    </subcellularLocation>
    <subcellularLocation>
        <location evidence="1">Chromosome</location>
        <location evidence="1">Telomere</location>
    </subcellularLocation>
</comment>
<comment type="similarity">
    <text evidence="3">Belongs to the ku80 family.</text>
</comment>
<gene>
    <name type="primary">ku80</name>
</gene>
<reference key="1">
    <citation type="journal article" date="2006" name="Biosci. Biotechnol. Biochem.">
        <title>Identification and analysis of Ku70 and Ku80 homologs in the koji molds Aspergillus sojae and Aspergillus oryzae.</title>
        <authorList>
            <person name="Takahashi T."/>
            <person name="Masuda T."/>
            <person name="Koyama Y."/>
        </authorList>
    </citation>
    <scope>NUCLEOTIDE SEQUENCE [GENOMIC DNA]</scope>
    <source>
        <strain>ATCC 42149 / RIB 40</strain>
    </source>
</reference>
<reference key="2">
    <citation type="journal article" date="2005" name="Nature">
        <title>Genome sequencing and analysis of Aspergillus oryzae.</title>
        <authorList>
            <person name="Machida M."/>
            <person name="Asai K."/>
            <person name="Sano M."/>
            <person name="Tanaka T."/>
            <person name="Kumagai T."/>
            <person name="Terai G."/>
            <person name="Kusumoto K."/>
            <person name="Arima T."/>
            <person name="Akita O."/>
            <person name="Kashiwagi Y."/>
            <person name="Abe K."/>
            <person name="Gomi K."/>
            <person name="Horiuchi H."/>
            <person name="Kitamoto K."/>
            <person name="Kobayashi T."/>
            <person name="Takeuchi M."/>
            <person name="Denning D.W."/>
            <person name="Galagan J.E."/>
            <person name="Nierman W.C."/>
            <person name="Yu J."/>
            <person name="Archer D.B."/>
            <person name="Bennett J.W."/>
            <person name="Bhatnagar D."/>
            <person name="Cleveland T.E."/>
            <person name="Fedorova N.D."/>
            <person name="Gotoh O."/>
            <person name="Horikawa H."/>
            <person name="Hosoyama A."/>
            <person name="Ichinomiya M."/>
            <person name="Igarashi R."/>
            <person name="Iwashita K."/>
            <person name="Juvvadi P.R."/>
            <person name="Kato M."/>
            <person name="Kato Y."/>
            <person name="Kin T."/>
            <person name="Kokubun A."/>
            <person name="Maeda H."/>
            <person name="Maeyama N."/>
            <person name="Maruyama J."/>
            <person name="Nagasaki H."/>
            <person name="Nakajima T."/>
            <person name="Oda K."/>
            <person name="Okada K."/>
            <person name="Paulsen I."/>
            <person name="Sakamoto K."/>
            <person name="Sawano T."/>
            <person name="Takahashi M."/>
            <person name="Takase K."/>
            <person name="Terabayashi Y."/>
            <person name="Wortman J.R."/>
            <person name="Yamada O."/>
            <person name="Yamagata Y."/>
            <person name="Anazawa H."/>
            <person name="Hata Y."/>
            <person name="Koide Y."/>
            <person name="Komori T."/>
            <person name="Koyama Y."/>
            <person name="Minetoki T."/>
            <person name="Suharnan S."/>
            <person name="Tanaka A."/>
            <person name="Isono K."/>
            <person name="Kuhara S."/>
            <person name="Ogasawara N."/>
            <person name="Kikuchi H."/>
        </authorList>
    </citation>
    <scope>NUCLEOTIDE SEQUENCE [LARGE SCALE GENOMIC DNA]</scope>
    <source>
        <strain>ATCC 42149 / RIB 40</strain>
    </source>
</reference>
<proteinExistence type="inferred from homology"/>
<evidence type="ECO:0000250" key="1"/>
<evidence type="ECO:0000256" key="2">
    <source>
        <dbReference type="SAM" id="MobiDB-lite"/>
    </source>
</evidence>
<evidence type="ECO:0000305" key="3"/>
<protein>
    <recommendedName>
        <fullName>ATP-dependent DNA helicase II subunit 2</fullName>
        <ecNumber>3.6.4.12</ecNumber>
    </recommendedName>
    <alternativeName>
        <fullName>ATP-dependent DNA helicase II subunit Ku80</fullName>
    </alternativeName>
</protein>
<accession>Q2MHH2</accession>
<organism>
    <name type="scientific">Aspergillus oryzae (strain ATCC 42149 / RIB 40)</name>
    <name type="common">Yellow koji mold</name>
    <dbReference type="NCBI Taxonomy" id="510516"/>
    <lineage>
        <taxon>Eukaryota</taxon>
        <taxon>Fungi</taxon>
        <taxon>Dikarya</taxon>
        <taxon>Ascomycota</taxon>
        <taxon>Pezizomycotina</taxon>
        <taxon>Eurotiomycetes</taxon>
        <taxon>Eurotiomycetidae</taxon>
        <taxon>Eurotiales</taxon>
        <taxon>Aspergillaceae</taxon>
        <taxon>Aspergillus</taxon>
        <taxon>Aspergillus subgen. Circumdati</taxon>
    </lineage>
</organism>
<keyword id="KW-0067">ATP-binding</keyword>
<keyword id="KW-0158">Chromosome</keyword>
<keyword id="KW-0227">DNA damage</keyword>
<keyword id="KW-0233">DNA recombination</keyword>
<keyword id="KW-0234">DNA repair</keyword>
<keyword id="KW-0238">DNA-binding</keyword>
<keyword id="KW-0347">Helicase</keyword>
<keyword id="KW-0378">Hydrolase</keyword>
<keyword id="KW-0547">Nucleotide-binding</keyword>
<keyword id="KW-0539">Nucleus</keyword>
<keyword id="KW-1185">Reference proteome</keyword>
<keyword id="KW-0779">Telomere</keyword>
<feature type="chain" id="PRO_0000278349" description="ATP-dependent DNA helicase II subunit 2">
    <location>
        <begin position="1"/>
        <end position="725"/>
    </location>
</feature>
<feature type="domain" description="Ku">
    <location>
        <begin position="229"/>
        <end position="481"/>
    </location>
</feature>
<feature type="region of interest" description="Disordered" evidence="2">
    <location>
        <begin position="259"/>
        <end position="298"/>
    </location>
</feature>
<feature type="region of interest" description="Disordered" evidence="2">
    <location>
        <begin position="704"/>
        <end position="725"/>
    </location>
</feature>
<feature type="compositionally biased region" description="Polar residues" evidence="2">
    <location>
        <begin position="285"/>
        <end position="298"/>
    </location>
</feature>